<dbReference type="EC" id="7.1.1.2"/>
<dbReference type="EMBL" id="X88896">
    <property type="protein sequence ID" value="CAA61356.1"/>
    <property type="molecule type" value="Genomic_DNA"/>
</dbReference>
<dbReference type="PIR" id="S65033">
    <property type="entry name" value="S65033"/>
</dbReference>
<dbReference type="SMR" id="Q36836"/>
<dbReference type="GO" id="GO:0031966">
    <property type="term" value="C:mitochondrial membrane"/>
    <property type="evidence" value="ECO:0007669"/>
    <property type="project" value="UniProtKB-SubCell"/>
</dbReference>
<dbReference type="GO" id="GO:0008137">
    <property type="term" value="F:NADH dehydrogenase (ubiquinone) activity"/>
    <property type="evidence" value="ECO:0007669"/>
    <property type="project" value="UniProtKB-EC"/>
</dbReference>
<dbReference type="Gene3D" id="1.20.120.1200">
    <property type="entry name" value="NADH-ubiquinone/plastoquinone oxidoreductase chain 6, subunit NuoJ"/>
    <property type="match status" value="1"/>
</dbReference>
<dbReference type="InterPro" id="IPR001457">
    <property type="entry name" value="NADH_UbQ/plastoQ_OxRdtase_su6"/>
</dbReference>
<dbReference type="InterPro" id="IPR042106">
    <property type="entry name" value="Nuo/plastoQ_OxRdtase_6_NuoJ"/>
</dbReference>
<dbReference type="PANTHER" id="PTHR33269">
    <property type="entry name" value="NADH-UBIQUINONE OXIDOREDUCTASE CHAIN 6"/>
    <property type="match status" value="1"/>
</dbReference>
<dbReference type="PANTHER" id="PTHR33269:SF17">
    <property type="entry name" value="NADH-UBIQUINONE OXIDOREDUCTASE CHAIN 6"/>
    <property type="match status" value="1"/>
</dbReference>
<dbReference type="Pfam" id="PF00499">
    <property type="entry name" value="Oxidored_q3"/>
    <property type="match status" value="1"/>
</dbReference>
<gene>
    <name type="primary">ND6</name>
    <name type="synonym">NADH6</name>
</gene>
<proteinExistence type="inferred from homology"/>
<geneLocation type="mitochondrion"/>
<protein>
    <recommendedName>
        <fullName>NADH-ubiquinone oxidoreductase chain 6</fullName>
        <ecNumber>7.1.1.2</ecNumber>
    </recommendedName>
    <alternativeName>
        <fullName>NADH dehydrogenase subunit 6</fullName>
    </alternativeName>
</protein>
<name>NU6M_TRIRU</name>
<reference key="1">
    <citation type="journal article" date="1995" name="Curr. Genet.">
        <title>Organisation of the mitochondrial genome of Trichophyton rubrum. DNA sequence analysis of the ND4 gene, the ATPase subunit-6 gene, the ribosomal RNA small-subunit gene, the ND6 gene, the COXIII gene, the ATPase subunit-8 gene and six tRNA genes that correspond respectively to the tyrosine, lysine, glutamine, asparagine, isoleucine and tryptophan isoacceptors.</title>
        <authorList>
            <person name="de Bievre C."/>
            <person name="Dujon B."/>
        </authorList>
    </citation>
    <scope>NUCLEOTIDE SEQUENCE [GENOMIC DNA]</scope>
    <source>
        <strain>IP 1817.89</strain>
    </source>
</reference>
<accession>Q36836</accession>
<comment type="function">
    <text evidence="1">Core subunit of the mitochondrial membrane respiratory chain NADH dehydrogenase (Complex I) that is believed to belong to the minimal assembly required for catalysis. Complex I functions in the transfer of electrons from NADH to the respiratory chain. The immediate electron acceptor for the enzyme is believed to be ubiquinone (By similarity).</text>
</comment>
<comment type="catalytic activity">
    <reaction>
        <text>a ubiquinone + NADH + 5 H(+)(in) = a ubiquinol + NAD(+) + 4 H(+)(out)</text>
        <dbReference type="Rhea" id="RHEA:29091"/>
        <dbReference type="Rhea" id="RHEA-COMP:9565"/>
        <dbReference type="Rhea" id="RHEA-COMP:9566"/>
        <dbReference type="ChEBI" id="CHEBI:15378"/>
        <dbReference type="ChEBI" id="CHEBI:16389"/>
        <dbReference type="ChEBI" id="CHEBI:17976"/>
        <dbReference type="ChEBI" id="CHEBI:57540"/>
        <dbReference type="ChEBI" id="CHEBI:57945"/>
        <dbReference type="EC" id="7.1.1.2"/>
    </reaction>
</comment>
<comment type="subcellular location">
    <subcellularLocation>
        <location evidence="3">Mitochondrion membrane</location>
        <topology evidence="3">Multi-pass membrane protein</topology>
    </subcellularLocation>
</comment>
<comment type="similarity">
    <text evidence="3">Belongs to the complex I subunit 6 family.</text>
</comment>
<sequence>MQLDLYVDKINNGFNSNILDILAFISIILGIYTIVSKNPVVSVLFLIGLFSTISIYLIMIGLTFIGLSYLLVYIGAVSILFLFILMLINIRISELVSTNNNYIPLAILSMITLVYILGQKIITNVVQFNILNSFTSSLFEKSFKESINYSNSLSWDTNLIDITHTSAIGNIMYSSYSFWLIIISLILLLAMVGSIVISIGRVI</sequence>
<organism>
    <name type="scientific">Trichophyton rubrum</name>
    <name type="common">Athlete's foot fungus</name>
    <name type="synonym">Epidermophyton rubrum</name>
    <dbReference type="NCBI Taxonomy" id="5551"/>
    <lineage>
        <taxon>Eukaryota</taxon>
        <taxon>Fungi</taxon>
        <taxon>Dikarya</taxon>
        <taxon>Ascomycota</taxon>
        <taxon>Pezizomycotina</taxon>
        <taxon>Eurotiomycetes</taxon>
        <taxon>Eurotiomycetidae</taxon>
        <taxon>Onygenales</taxon>
        <taxon>Arthrodermataceae</taxon>
        <taxon>Trichophyton</taxon>
    </lineage>
</organism>
<feature type="chain" id="PRO_0000118343" description="NADH-ubiquinone oxidoreductase chain 6">
    <location>
        <begin position="1"/>
        <end position="203"/>
    </location>
</feature>
<feature type="transmembrane region" description="Helical" evidence="2">
    <location>
        <begin position="16"/>
        <end position="36"/>
    </location>
</feature>
<feature type="transmembrane region" description="Helical" evidence="2">
    <location>
        <begin position="40"/>
        <end position="60"/>
    </location>
</feature>
<feature type="transmembrane region" description="Helical" evidence="2">
    <location>
        <begin position="70"/>
        <end position="90"/>
    </location>
</feature>
<feature type="transmembrane region" description="Helical" evidence="2">
    <location>
        <begin position="102"/>
        <end position="122"/>
    </location>
</feature>
<feature type="transmembrane region" description="Helical" evidence="2">
    <location>
        <begin position="179"/>
        <end position="199"/>
    </location>
</feature>
<keyword id="KW-0249">Electron transport</keyword>
<keyword id="KW-0472">Membrane</keyword>
<keyword id="KW-0496">Mitochondrion</keyword>
<keyword id="KW-0520">NAD</keyword>
<keyword id="KW-0679">Respiratory chain</keyword>
<keyword id="KW-1278">Translocase</keyword>
<keyword id="KW-0812">Transmembrane</keyword>
<keyword id="KW-1133">Transmembrane helix</keyword>
<keyword id="KW-0813">Transport</keyword>
<keyword id="KW-0830">Ubiquinone</keyword>
<evidence type="ECO:0000250" key="1"/>
<evidence type="ECO:0000255" key="2"/>
<evidence type="ECO:0000305" key="3"/>